<proteinExistence type="inferred from homology"/>
<protein>
    <recommendedName>
        <fullName evidence="1">UPF0441 protein YgiB</fullName>
    </recommendedName>
</protein>
<feature type="chain" id="PRO_1000085469" description="UPF0441 protein YgiB">
    <location>
        <begin position="1"/>
        <end position="223"/>
    </location>
</feature>
<feature type="region of interest" description="Disordered" evidence="2">
    <location>
        <begin position="178"/>
        <end position="223"/>
    </location>
</feature>
<feature type="compositionally biased region" description="Low complexity" evidence="2">
    <location>
        <begin position="178"/>
        <end position="195"/>
    </location>
</feature>
<feature type="compositionally biased region" description="Polar residues" evidence="2">
    <location>
        <begin position="204"/>
        <end position="223"/>
    </location>
</feature>
<sequence>MKRTKSIHHASFRKSWSARHLTPVALAVTAVFMLAGCEKSDETVSLYQNADDCSAANPGKSAECTTAYNNALKEAERTAPKYATREDCVAEFGEGQCQQAPAQAGMAPENQAQAQQSSGSFWMPLMAGYMMGRLMGGGAGFAQQPLFSSKNPASPAYGKYTDAAGKNYGAAQPGRTMTVPKTAMAPKPATTTTVTRGGFGESVAKQSTMQRSAAGTSTRSMGG</sequence>
<reference key="1">
    <citation type="submission" date="2007-11" db="EMBL/GenBank/DDBJ databases">
        <authorList>
            <consortium name="The Salmonella enterica serovar Paratyphi B Genome Sequencing Project"/>
            <person name="McClelland M."/>
            <person name="Sanderson E.K."/>
            <person name="Porwollik S."/>
            <person name="Spieth J."/>
            <person name="Clifton W.S."/>
            <person name="Fulton R."/>
            <person name="Cordes M."/>
            <person name="Wollam A."/>
            <person name="Shah N."/>
            <person name="Pepin K."/>
            <person name="Bhonagiri V."/>
            <person name="Nash W."/>
            <person name="Johnson M."/>
            <person name="Thiruvilangam P."/>
            <person name="Wilson R."/>
        </authorList>
    </citation>
    <scope>NUCLEOTIDE SEQUENCE [LARGE SCALE GENOMIC DNA]</scope>
    <source>
        <strain>ATCC BAA-1250 / SPB7</strain>
    </source>
</reference>
<comment type="similarity">
    <text evidence="1">Belongs to the UPF0441 family.</text>
</comment>
<dbReference type="EMBL" id="CP000886">
    <property type="protein sequence ID" value="ABX69309.1"/>
    <property type="molecule type" value="Genomic_DNA"/>
</dbReference>
<dbReference type="RefSeq" id="WP_000831528.1">
    <property type="nucleotide sequence ID" value="NC_010102.1"/>
</dbReference>
<dbReference type="KEGG" id="spq:SPAB_03979"/>
<dbReference type="PATRIC" id="fig|1016998.12.peg.3751"/>
<dbReference type="HOGENOM" id="CLU_095624_0_0_6"/>
<dbReference type="BioCyc" id="SENT1016998:SPAB_RS16155-MONOMER"/>
<dbReference type="Proteomes" id="UP000008556">
    <property type="component" value="Chromosome"/>
</dbReference>
<dbReference type="HAMAP" id="MF_01188">
    <property type="entry name" value="UPF0441"/>
    <property type="match status" value="1"/>
</dbReference>
<dbReference type="InterPro" id="IPR009576">
    <property type="entry name" value="Biofilm_formation_YgiB"/>
</dbReference>
<dbReference type="NCBIfam" id="NF008655">
    <property type="entry name" value="PRK11653.1"/>
    <property type="match status" value="1"/>
</dbReference>
<dbReference type="Pfam" id="PF06693">
    <property type="entry name" value="DUF1190"/>
    <property type="match status" value="1"/>
</dbReference>
<accession>A9N5W3</accession>
<gene>
    <name evidence="1" type="primary">ygiB</name>
    <name type="ordered locus">SPAB_03979</name>
</gene>
<evidence type="ECO:0000255" key="1">
    <source>
        <dbReference type="HAMAP-Rule" id="MF_01188"/>
    </source>
</evidence>
<evidence type="ECO:0000256" key="2">
    <source>
        <dbReference type="SAM" id="MobiDB-lite"/>
    </source>
</evidence>
<name>YGIB_SALPB</name>
<organism>
    <name type="scientific">Salmonella paratyphi B (strain ATCC BAA-1250 / SPB7)</name>
    <dbReference type="NCBI Taxonomy" id="1016998"/>
    <lineage>
        <taxon>Bacteria</taxon>
        <taxon>Pseudomonadati</taxon>
        <taxon>Pseudomonadota</taxon>
        <taxon>Gammaproteobacteria</taxon>
        <taxon>Enterobacterales</taxon>
        <taxon>Enterobacteriaceae</taxon>
        <taxon>Salmonella</taxon>
    </lineage>
</organism>